<name>NUOB_RUBXD</name>
<protein>
    <recommendedName>
        <fullName evidence="1">NADH-quinone oxidoreductase subunit B</fullName>
        <ecNumber evidence="1">7.1.1.-</ecNumber>
    </recommendedName>
    <alternativeName>
        <fullName evidence="1">NADH dehydrogenase I subunit B</fullName>
    </alternativeName>
    <alternativeName>
        <fullName evidence="1">NDH-1 subunit B</fullName>
    </alternativeName>
</protein>
<accession>Q1AVI4</accession>
<sequence length="251" mass="27841">MGLMQKFDEPNIITTSTDKLFNWARKNSLWPLQFGLACCAIEMMSTGMAHNDLERFGAGFFAGSPRQADVMIVSGTVSTKMAERMTRLYEQMPEPKWVIAMGACAISGGPFLDGYSVLMGADRVIPVDVYVPGCPPRPEALIFGIMTLQKKIEREQQVGYEKPRPALVDEEGNIREYLPEREYRQISEGKAHRPKGIKRLPRTYVFQRKGLPPGSMTDVGWIPPEARERLKAGRGAGASGSGEREEGKEGA</sequence>
<keyword id="KW-0004">4Fe-4S</keyword>
<keyword id="KW-1003">Cell membrane</keyword>
<keyword id="KW-0408">Iron</keyword>
<keyword id="KW-0411">Iron-sulfur</keyword>
<keyword id="KW-0472">Membrane</keyword>
<keyword id="KW-0479">Metal-binding</keyword>
<keyword id="KW-0520">NAD</keyword>
<keyword id="KW-0874">Quinone</keyword>
<keyword id="KW-1185">Reference proteome</keyword>
<keyword id="KW-1278">Translocase</keyword>
<keyword id="KW-0813">Transport</keyword>
<reference key="1">
    <citation type="submission" date="2006-06" db="EMBL/GenBank/DDBJ databases">
        <title>Complete sequence of Rubrobacter xylanophilus DSM 9941.</title>
        <authorList>
            <consortium name="US DOE Joint Genome Institute"/>
            <person name="Copeland A."/>
            <person name="Lucas S."/>
            <person name="Lapidus A."/>
            <person name="Barry K."/>
            <person name="Detter J.C."/>
            <person name="Glavina del Rio T."/>
            <person name="Hammon N."/>
            <person name="Israni S."/>
            <person name="Dalin E."/>
            <person name="Tice H."/>
            <person name="Pitluck S."/>
            <person name="Munk A.C."/>
            <person name="Brettin T."/>
            <person name="Bruce D."/>
            <person name="Han C."/>
            <person name="Tapia R."/>
            <person name="Gilna P."/>
            <person name="Schmutz J."/>
            <person name="Larimer F."/>
            <person name="Land M."/>
            <person name="Hauser L."/>
            <person name="Kyrpides N."/>
            <person name="Lykidis A."/>
            <person name="da Costa M.S."/>
            <person name="Rainey F.A."/>
            <person name="Empadinhas N."/>
            <person name="Jolivet E."/>
            <person name="Battista J.R."/>
            <person name="Richardson P."/>
        </authorList>
    </citation>
    <scope>NUCLEOTIDE SEQUENCE [LARGE SCALE GENOMIC DNA]</scope>
    <source>
        <strain>DSM 9941 / JCM 11954 / NBRC 16129 / PRD-1</strain>
    </source>
</reference>
<organism>
    <name type="scientific">Rubrobacter xylanophilus (strain DSM 9941 / JCM 11954 / NBRC 16129 / PRD-1)</name>
    <dbReference type="NCBI Taxonomy" id="266117"/>
    <lineage>
        <taxon>Bacteria</taxon>
        <taxon>Bacillati</taxon>
        <taxon>Actinomycetota</taxon>
        <taxon>Rubrobacteria</taxon>
        <taxon>Rubrobacterales</taxon>
        <taxon>Rubrobacteraceae</taxon>
        <taxon>Rubrobacter</taxon>
    </lineage>
</organism>
<evidence type="ECO:0000255" key="1">
    <source>
        <dbReference type="HAMAP-Rule" id="MF_01356"/>
    </source>
</evidence>
<evidence type="ECO:0000256" key="2">
    <source>
        <dbReference type="SAM" id="MobiDB-lite"/>
    </source>
</evidence>
<proteinExistence type="inferred from homology"/>
<dbReference type="EC" id="7.1.1.-" evidence="1"/>
<dbReference type="EMBL" id="CP000386">
    <property type="protein sequence ID" value="ABG04594.1"/>
    <property type="molecule type" value="Genomic_DNA"/>
</dbReference>
<dbReference type="RefSeq" id="WP_011564611.1">
    <property type="nucleotide sequence ID" value="NC_008148.1"/>
</dbReference>
<dbReference type="SMR" id="Q1AVI4"/>
<dbReference type="STRING" id="266117.Rxyl_1633"/>
<dbReference type="KEGG" id="rxy:Rxyl_1633"/>
<dbReference type="eggNOG" id="COG0377">
    <property type="taxonomic scope" value="Bacteria"/>
</dbReference>
<dbReference type="HOGENOM" id="CLU_084209_0_0_11"/>
<dbReference type="OrthoDB" id="9786737at2"/>
<dbReference type="PhylomeDB" id="Q1AVI4"/>
<dbReference type="Proteomes" id="UP000006637">
    <property type="component" value="Chromosome"/>
</dbReference>
<dbReference type="GO" id="GO:0005886">
    <property type="term" value="C:plasma membrane"/>
    <property type="evidence" value="ECO:0007669"/>
    <property type="project" value="UniProtKB-SubCell"/>
</dbReference>
<dbReference type="GO" id="GO:0045271">
    <property type="term" value="C:respiratory chain complex I"/>
    <property type="evidence" value="ECO:0007669"/>
    <property type="project" value="TreeGrafter"/>
</dbReference>
<dbReference type="GO" id="GO:0051539">
    <property type="term" value="F:4 iron, 4 sulfur cluster binding"/>
    <property type="evidence" value="ECO:0007669"/>
    <property type="project" value="UniProtKB-KW"/>
</dbReference>
<dbReference type="GO" id="GO:0005506">
    <property type="term" value="F:iron ion binding"/>
    <property type="evidence" value="ECO:0007669"/>
    <property type="project" value="UniProtKB-UniRule"/>
</dbReference>
<dbReference type="GO" id="GO:0008137">
    <property type="term" value="F:NADH dehydrogenase (ubiquinone) activity"/>
    <property type="evidence" value="ECO:0007669"/>
    <property type="project" value="InterPro"/>
</dbReference>
<dbReference type="GO" id="GO:0050136">
    <property type="term" value="F:NADH:ubiquinone reductase (non-electrogenic) activity"/>
    <property type="evidence" value="ECO:0007669"/>
    <property type="project" value="UniProtKB-UniRule"/>
</dbReference>
<dbReference type="GO" id="GO:0048038">
    <property type="term" value="F:quinone binding"/>
    <property type="evidence" value="ECO:0007669"/>
    <property type="project" value="UniProtKB-KW"/>
</dbReference>
<dbReference type="GO" id="GO:0009060">
    <property type="term" value="P:aerobic respiration"/>
    <property type="evidence" value="ECO:0007669"/>
    <property type="project" value="TreeGrafter"/>
</dbReference>
<dbReference type="GO" id="GO:0015990">
    <property type="term" value="P:electron transport coupled proton transport"/>
    <property type="evidence" value="ECO:0007669"/>
    <property type="project" value="TreeGrafter"/>
</dbReference>
<dbReference type="FunFam" id="3.40.50.12280:FF:000002">
    <property type="entry name" value="NADH-quinone oxidoreductase subunit B"/>
    <property type="match status" value="1"/>
</dbReference>
<dbReference type="Gene3D" id="3.40.50.12280">
    <property type="match status" value="1"/>
</dbReference>
<dbReference type="HAMAP" id="MF_01356">
    <property type="entry name" value="NDH1_NuoB"/>
    <property type="match status" value="1"/>
</dbReference>
<dbReference type="InterPro" id="IPR006137">
    <property type="entry name" value="NADH_UbQ_OxRdtase-like_20kDa"/>
</dbReference>
<dbReference type="InterPro" id="IPR006138">
    <property type="entry name" value="NADH_UQ_OxRdtase_20Kd_su"/>
</dbReference>
<dbReference type="NCBIfam" id="TIGR01957">
    <property type="entry name" value="nuoB_fam"/>
    <property type="match status" value="1"/>
</dbReference>
<dbReference type="NCBIfam" id="NF005012">
    <property type="entry name" value="PRK06411.1"/>
    <property type="match status" value="1"/>
</dbReference>
<dbReference type="PANTHER" id="PTHR11995">
    <property type="entry name" value="NADH DEHYDROGENASE"/>
    <property type="match status" value="1"/>
</dbReference>
<dbReference type="PANTHER" id="PTHR11995:SF14">
    <property type="entry name" value="NADH DEHYDROGENASE [UBIQUINONE] IRON-SULFUR PROTEIN 7, MITOCHONDRIAL"/>
    <property type="match status" value="1"/>
</dbReference>
<dbReference type="Pfam" id="PF01058">
    <property type="entry name" value="Oxidored_q6"/>
    <property type="match status" value="1"/>
</dbReference>
<dbReference type="SUPFAM" id="SSF56770">
    <property type="entry name" value="HydA/Nqo6-like"/>
    <property type="match status" value="1"/>
</dbReference>
<dbReference type="PROSITE" id="PS01150">
    <property type="entry name" value="COMPLEX1_20K"/>
    <property type="match status" value="1"/>
</dbReference>
<comment type="function">
    <text evidence="1">NDH-1 shuttles electrons from NADH, via FMN and iron-sulfur (Fe-S) centers, to quinones in the respiratory chain. The immediate electron acceptor for the enzyme in this species is believed to be a menaquinone. Couples the redox reaction to proton translocation (for every two electrons transferred, four hydrogen ions are translocated across the cytoplasmic membrane), and thus conserves the redox energy in a proton gradient.</text>
</comment>
<comment type="catalytic activity">
    <reaction evidence="1">
        <text>a quinone + NADH + 5 H(+)(in) = a quinol + NAD(+) + 4 H(+)(out)</text>
        <dbReference type="Rhea" id="RHEA:57888"/>
        <dbReference type="ChEBI" id="CHEBI:15378"/>
        <dbReference type="ChEBI" id="CHEBI:24646"/>
        <dbReference type="ChEBI" id="CHEBI:57540"/>
        <dbReference type="ChEBI" id="CHEBI:57945"/>
        <dbReference type="ChEBI" id="CHEBI:132124"/>
    </reaction>
</comment>
<comment type="cofactor">
    <cofactor evidence="1">
        <name>[4Fe-4S] cluster</name>
        <dbReference type="ChEBI" id="CHEBI:49883"/>
    </cofactor>
    <text evidence="1">Binds 1 [4Fe-4S] cluster.</text>
</comment>
<comment type="subunit">
    <text evidence="1">NDH-1 is composed of 14 different subunits. Subunits NuoB, C, D, E, F, and G constitute the peripheral sector of the complex.</text>
</comment>
<comment type="subcellular location">
    <subcellularLocation>
        <location evidence="1">Cell membrane</location>
        <topology evidence="1">Peripheral membrane protein</topology>
        <orientation evidence="1">Cytoplasmic side</orientation>
    </subcellularLocation>
</comment>
<comment type="similarity">
    <text evidence="1">Belongs to the complex I 20 kDa subunit family.</text>
</comment>
<feature type="chain" id="PRO_0000376352" description="NADH-quinone oxidoreductase subunit B">
    <location>
        <begin position="1"/>
        <end position="251"/>
    </location>
</feature>
<feature type="region of interest" description="Disordered" evidence="2">
    <location>
        <begin position="208"/>
        <end position="251"/>
    </location>
</feature>
<feature type="compositionally biased region" description="Basic and acidic residues" evidence="2">
    <location>
        <begin position="242"/>
        <end position="251"/>
    </location>
</feature>
<feature type="binding site" evidence="1">
    <location>
        <position position="38"/>
    </location>
    <ligand>
        <name>[4Fe-4S] cluster</name>
        <dbReference type="ChEBI" id="CHEBI:49883"/>
    </ligand>
</feature>
<feature type="binding site" evidence="1">
    <location>
        <position position="39"/>
    </location>
    <ligand>
        <name>[4Fe-4S] cluster</name>
        <dbReference type="ChEBI" id="CHEBI:49883"/>
    </ligand>
</feature>
<feature type="binding site" evidence="1">
    <location>
        <position position="104"/>
    </location>
    <ligand>
        <name>[4Fe-4S] cluster</name>
        <dbReference type="ChEBI" id="CHEBI:49883"/>
    </ligand>
</feature>
<feature type="binding site" evidence="1">
    <location>
        <position position="134"/>
    </location>
    <ligand>
        <name>[4Fe-4S] cluster</name>
        <dbReference type="ChEBI" id="CHEBI:49883"/>
    </ligand>
</feature>
<gene>
    <name evidence="1" type="primary">nuoB</name>
    <name type="ordered locus">Rxyl_1633</name>
</gene>